<evidence type="ECO:0000255" key="1">
    <source>
        <dbReference type="HAMAP-Rule" id="MF_00302"/>
    </source>
</evidence>
<reference key="1">
    <citation type="journal article" date="2006" name="Proc. Natl. Acad. Sci. U.S.A.">
        <title>Genome reduction in Leptospira borgpetersenii reflects limited transmission potential.</title>
        <authorList>
            <person name="Bulach D.M."/>
            <person name="Zuerner R.L."/>
            <person name="Wilson P."/>
            <person name="Seemann T."/>
            <person name="McGrath A."/>
            <person name="Cullen P.A."/>
            <person name="Davis J."/>
            <person name="Johnson M."/>
            <person name="Kuczek E."/>
            <person name="Alt D.P."/>
            <person name="Peterson-Burch B."/>
            <person name="Coppel R.L."/>
            <person name="Rood J.I."/>
            <person name="Davies J.K."/>
            <person name="Adler B."/>
        </authorList>
    </citation>
    <scope>NUCLEOTIDE SEQUENCE [LARGE SCALE GENOMIC DNA]</scope>
    <source>
        <strain>L550</strain>
    </source>
</reference>
<dbReference type="EMBL" id="CP000348">
    <property type="protein sequence ID" value="ABJ78868.1"/>
    <property type="molecule type" value="Genomic_DNA"/>
</dbReference>
<dbReference type="RefSeq" id="WP_011670079.1">
    <property type="nucleotide sequence ID" value="NC_008508.1"/>
</dbReference>
<dbReference type="SMR" id="Q051X7"/>
<dbReference type="KEGG" id="lbl:LBL_1378"/>
<dbReference type="HOGENOM" id="CLU_134358_1_0_12"/>
<dbReference type="GO" id="GO:0030163">
    <property type="term" value="P:protein catabolic process"/>
    <property type="evidence" value="ECO:0007669"/>
    <property type="project" value="InterPro"/>
</dbReference>
<dbReference type="GO" id="GO:0006508">
    <property type="term" value="P:proteolysis"/>
    <property type="evidence" value="ECO:0007669"/>
    <property type="project" value="UniProtKB-UniRule"/>
</dbReference>
<dbReference type="FunFam" id="3.30.1390.10:FF:000002">
    <property type="entry name" value="ATP-dependent Clp protease adapter protein ClpS"/>
    <property type="match status" value="1"/>
</dbReference>
<dbReference type="Gene3D" id="3.30.1390.10">
    <property type="match status" value="1"/>
</dbReference>
<dbReference type="HAMAP" id="MF_00302">
    <property type="entry name" value="ClpS"/>
    <property type="match status" value="1"/>
</dbReference>
<dbReference type="InterPro" id="IPR022935">
    <property type="entry name" value="ClpS"/>
</dbReference>
<dbReference type="InterPro" id="IPR003769">
    <property type="entry name" value="ClpS_core"/>
</dbReference>
<dbReference type="InterPro" id="IPR014719">
    <property type="entry name" value="Ribosomal_bL12_C/ClpS-like"/>
</dbReference>
<dbReference type="NCBIfam" id="NF000672">
    <property type="entry name" value="PRK00033.1-5"/>
    <property type="match status" value="1"/>
</dbReference>
<dbReference type="PANTHER" id="PTHR33473:SF19">
    <property type="entry name" value="ATP-DEPENDENT CLP PROTEASE ADAPTER PROTEIN CLPS"/>
    <property type="match status" value="1"/>
</dbReference>
<dbReference type="PANTHER" id="PTHR33473">
    <property type="entry name" value="ATP-DEPENDENT CLP PROTEASE ADAPTER PROTEIN CLPS1, CHLOROPLASTIC"/>
    <property type="match status" value="1"/>
</dbReference>
<dbReference type="Pfam" id="PF02617">
    <property type="entry name" value="ClpS"/>
    <property type="match status" value="1"/>
</dbReference>
<dbReference type="SUPFAM" id="SSF54736">
    <property type="entry name" value="ClpS-like"/>
    <property type="match status" value="1"/>
</dbReference>
<comment type="function">
    <text evidence="1">Involved in the modulation of the specificity of the ClpAP-mediated ATP-dependent protein degradation.</text>
</comment>
<comment type="subunit">
    <text evidence="1">Binds to the N-terminal domain of the chaperone ClpA.</text>
</comment>
<comment type="similarity">
    <text evidence="1">Belongs to the ClpS family.</text>
</comment>
<proteinExistence type="inferred from homology"/>
<organism>
    <name type="scientific">Leptospira borgpetersenii serovar Hardjo-bovis (strain L550)</name>
    <dbReference type="NCBI Taxonomy" id="355276"/>
    <lineage>
        <taxon>Bacteria</taxon>
        <taxon>Pseudomonadati</taxon>
        <taxon>Spirochaetota</taxon>
        <taxon>Spirochaetia</taxon>
        <taxon>Leptospirales</taxon>
        <taxon>Leptospiraceae</taxon>
        <taxon>Leptospira</taxon>
    </lineage>
</organism>
<gene>
    <name evidence="1" type="primary">clpS</name>
    <name type="ordered locus">LBL_1378</name>
</gene>
<protein>
    <recommendedName>
        <fullName evidence="1">ATP-dependent Clp protease adapter protein ClpS</fullName>
    </recommendedName>
</protein>
<name>CLPS_LEPBL</name>
<accession>Q051X7</accession>
<feature type="chain" id="PRO_0000300709" description="ATP-dependent Clp protease adapter protein ClpS">
    <location>
        <begin position="1"/>
        <end position="108"/>
    </location>
</feature>
<sequence length="108" mass="12698">MSDIFRFDTEEQTLTKEKVKLKRPSKYRVIILNDDFTPMEFVVWILQFVFHRSRAQSQQIMLKAHITGKALCGVYSHDVARTKVIQVQQLAEQHGYPLHCTMEVEEES</sequence>